<feature type="chain" id="PRO_0000092339" description="Heterocyst differentiation ATP-binding protein HepA">
    <location>
        <begin position="1"/>
        <end position="607"/>
    </location>
</feature>
<feature type="transmembrane region" description="Helical" evidence="2">
    <location>
        <begin position="33"/>
        <end position="53"/>
    </location>
</feature>
<feature type="transmembrane region" description="Helical" evidence="2">
    <location>
        <begin position="77"/>
        <end position="97"/>
    </location>
</feature>
<feature type="transmembrane region" description="Helical" evidence="2">
    <location>
        <begin position="163"/>
        <end position="182"/>
    </location>
</feature>
<feature type="transmembrane region" description="Helical" evidence="2">
    <location>
        <begin position="186"/>
        <end position="208"/>
    </location>
</feature>
<feature type="transmembrane region" description="Helical" evidence="2">
    <location>
        <begin position="290"/>
        <end position="310"/>
    </location>
</feature>
<feature type="domain" description="ABC transmembrane type-1" evidence="2">
    <location>
        <begin position="32"/>
        <end position="330"/>
    </location>
</feature>
<feature type="domain" description="ABC transporter" evidence="1">
    <location>
        <begin position="364"/>
        <end position="598"/>
    </location>
</feature>
<feature type="binding site" evidence="1">
    <location>
        <begin position="397"/>
        <end position="404"/>
    </location>
    <ligand>
        <name>ATP</name>
        <dbReference type="ChEBI" id="CHEBI:30616"/>
    </ligand>
</feature>
<name>HEPA_NOSS1</name>
<organism>
    <name type="scientific">Nostoc sp. (strain PCC 7120 / SAG 25.82 / UTEX 2576)</name>
    <dbReference type="NCBI Taxonomy" id="103690"/>
    <lineage>
        <taxon>Bacteria</taxon>
        <taxon>Bacillati</taxon>
        <taxon>Cyanobacteriota</taxon>
        <taxon>Cyanophyceae</taxon>
        <taxon>Nostocales</taxon>
        <taxon>Nostocaceae</taxon>
        <taxon>Nostoc</taxon>
    </lineage>
</organism>
<proteinExistence type="evidence at transcript level"/>
<reference key="1">
    <citation type="journal article" date="1990" name="J. Bacteriol.">
        <title>Identification and characterization of hetA, a gene that acts early in the process of morphological differentiation of heterocysts.</title>
        <authorList>
            <person name="Holland D."/>
            <person name="Wolk C.P."/>
        </authorList>
    </citation>
    <scope>NUCLEOTIDE SEQUENCE [GENOMIC DNA]</scope>
</reference>
<reference key="2">
    <citation type="submission" date="1997-10" db="EMBL/GenBank/DDBJ databases">
        <authorList>
            <person name="Zhu J."/>
            <person name="Wolk C.P."/>
        </authorList>
    </citation>
    <scope>SEQUENCE REVISION</scope>
</reference>
<reference key="3">
    <citation type="journal article" date="2001" name="DNA Res.">
        <title>Complete genomic sequence of the filamentous nitrogen-fixing cyanobacterium Anabaena sp. strain PCC 7120.</title>
        <authorList>
            <person name="Kaneko T."/>
            <person name="Nakamura Y."/>
            <person name="Wolk C.P."/>
            <person name="Kuritz T."/>
            <person name="Sasamoto S."/>
            <person name="Watanabe A."/>
            <person name="Iriguchi M."/>
            <person name="Ishikawa A."/>
            <person name="Kawashima K."/>
            <person name="Kimura T."/>
            <person name="Kishida Y."/>
            <person name="Kohara M."/>
            <person name="Matsumoto M."/>
            <person name="Matsuno A."/>
            <person name="Muraki A."/>
            <person name="Nakazaki N."/>
            <person name="Shimpo S."/>
            <person name="Sugimoto M."/>
            <person name="Takazawa M."/>
            <person name="Yamada M."/>
            <person name="Yasuda M."/>
            <person name="Tabata S."/>
        </authorList>
    </citation>
    <scope>NUCLEOTIDE SEQUENCE [LARGE SCALE GENOMIC DNA]</scope>
    <source>
        <strain>PCC 7120 / SAG 25.82 / UTEX 2576</strain>
    </source>
</reference>
<comment type="function">
    <text>Acts early in the process of morphological differentiation of heterocysts.</text>
</comment>
<comment type="subcellular location">
    <subcellularLocation>
        <location evidence="3">Cell inner membrane</location>
        <topology evidence="2">Multi-pass membrane protein</topology>
    </subcellularLocation>
</comment>
<comment type="induction">
    <text>By deprivation of nitrate.</text>
</comment>
<comment type="similarity">
    <text evidence="3">Belongs to the ABC transporter superfamily.</text>
</comment>
<comment type="sequence caution" evidence="3">
    <conflict type="erroneous initiation">
        <sequence resource="EMBL-CDS" id="AAC32400"/>
    </conflict>
</comment>
<keyword id="KW-0067">ATP-binding</keyword>
<keyword id="KW-0997">Cell inner membrane</keyword>
<keyword id="KW-1003">Cell membrane</keyword>
<keyword id="KW-0364">Heterocyst</keyword>
<keyword id="KW-0472">Membrane</keyword>
<keyword id="KW-0547">Nucleotide-binding</keyword>
<keyword id="KW-1185">Reference proteome</keyword>
<keyword id="KW-0812">Transmembrane</keyword>
<keyword id="KW-1133">Transmembrane helix</keyword>
<gene>
    <name type="primary">hepA</name>
    <name type="synonym">hetA</name>
    <name type="ordered locus">alr2835</name>
</gene>
<dbReference type="EMBL" id="AF031959">
    <property type="protein sequence ID" value="AAC32400.1"/>
    <property type="status" value="ALT_INIT"/>
    <property type="molecule type" value="Genomic_DNA"/>
</dbReference>
<dbReference type="EMBL" id="BA000019">
    <property type="protein sequence ID" value="BAB74534.1"/>
    <property type="molecule type" value="Genomic_DNA"/>
</dbReference>
<dbReference type="PIR" id="AD2160">
    <property type="entry name" value="AD2160"/>
</dbReference>
<dbReference type="RefSeq" id="WP_010996986.1">
    <property type="nucleotide sequence ID" value="NZ_RSCN01000003.1"/>
</dbReference>
<dbReference type="SMR" id="P22638"/>
<dbReference type="STRING" id="103690.gene:10494869"/>
<dbReference type="KEGG" id="ana:alr2835"/>
<dbReference type="eggNOG" id="COG1132">
    <property type="taxonomic scope" value="Bacteria"/>
</dbReference>
<dbReference type="OrthoDB" id="501491at2"/>
<dbReference type="Proteomes" id="UP000002483">
    <property type="component" value="Chromosome"/>
</dbReference>
<dbReference type="GO" id="GO:0005886">
    <property type="term" value="C:plasma membrane"/>
    <property type="evidence" value="ECO:0007669"/>
    <property type="project" value="UniProtKB-SubCell"/>
</dbReference>
<dbReference type="GO" id="GO:0140359">
    <property type="term" value="F:ABC-type transporter activity"/>
    <property type="evidence" value="ECO:0007669"/>
    <property type="project" value="InterPro"/>
</dbReference>
<dbReference type="GO" id="GO:0005524">
    <property type="term" value="F:ATP binding"/>
    <property type="evidence" value="ECO:0007669"/>
    <property type="project" value="UniProtKB-KW"/>
</dbReference>
<dbReference type="GO" id="GO:0016887">
    <property type="term" value="F:ATP hydrolysis activity"/>
    <property type="evidence" value="ECO:0007669"/>
    <property type="project" value="InterPro"/>
</dbReference>
<dbReference type="GO" id="GO:0034040">
    <property type="term" value="F:ATPase-coupled lipid transmembrane transporter activity"/>
    <property type="evidence" value="ECO:0007669"/>
    <property type="project" value="TreeGrafter"/>
</dbReference>
<dbReference type="GO" id="GO:0043158">
    <property type="term" value="P:heterocyst development"/>
    <property type="evidence" value="ECO:0007669"/>
    <property type="project" value="UniProtKB-KW"/>
</dbReference>
<dbReference type="CDD" id="cd03251">
    <property type="entry name" value="ABCC_MsbA"/>
    <property type="match status" value="1"/>
</dbReference>
<dbReference type="FunFam" id="3.40.50.300:FF:000218">
    <property type="entry name" value="Multidrug ABC transporter ATP-binding protein"/>
    <property type="match status" value="1"/>
</dbReference>
<dbReference type="Gene3D" id="1.20.1560.10">
    <property type="entry name" value="ABC transporter type 1, transmembrane domain"/>
    <property type="match status" value="1"/>
</dbReference>
<dbReference type="Gene3D" id="3.40.50.300">
    <property type="entry name" value="P-loop containing nucleotide triphosphate hydrolases"/>
    <property type="match status" value="1"/>
</dbReference>
<dbReference type="InterPro" id="IPR003593">
    <property type="entry name" value="AAA+_ATPase"/>
</dbReference>
<dbReference type="InterPro" id="IPR011527">
    <property type="entry name" value="ABC1_TM_dom"/>
</dbReference>
<dbReference type="InterPro" id="IPR036640">
    <property type="entry name" value="ABC1_TM_sf"/>
</dbReference>
<dbReference type="InterPro" id="IPR003439">
    <property type="entry name" value="ABC_transporter-like_ATP-bd"/>
</dbReference>
<dbReference type="InterPro" id="IPR017871">
    <property type="entry name" value="ABC_transporter-like_CS"/>
</dbReference>
<dbReference type="InterPro" id="IPR027417">
    <property type="entry name" value="P-loop_NTPase"/>
</dbReference>
<dbReference type="InterPro" id="IPR039421">
    <property type="entry name" value="Type_1_exporter"/>
</dbReference>
<dbReference type="NCBIfam" id="NF045513">
    <property type="entry name" value="HepA_fam_ABC"/>
    <property type="match status" value="1"/>
</dbReference>
<dbReference type="PANTHER" id="PTHR24221">
    <property type="entry name" value="ATP-BINDING CASSETTE SUB-FAMILY B"/>
    <property type="match status" value="1"/>
</dbReference>
<dbReference type="PANTHER" id="PTHR24221:SF654">
    <property type="entry name" value="ATP-BINDING CASSETTE SUB-FAMILY B MEMBER 6"/>
    <property type="match status" value="1"/>
</dbReference>
<dbReference type="Pfam" id="PF00664">
    <property type="entry name" value="ABC_membrane"/>
    <property type="match status" value="1"/>
</dbReference>
<dbReference type="Pfam" id="PF00005">
    <property type="entry name" value="ABC_tran"/>
    <property type="match status" value="1"/>
</dbReference>
<dbReference type="SMART" id="SM00382">
    <property type="entry name" value="AAA"/>
    <property type="match status" value="1"/>
</dbReference>
<dbReference type="SUPFAM" id="SSF90123">
    <property type="entry name" value="ABC transporter transmembrane region"/>
    <property type="match status" value="1"/>
</dbReference>
<dbReference type="SUPFAM" id="SSF52540">
    <property type="entry name" value="P-loop containing nucleoside triphosphate hydrolases"/>
    <property type="match status" value="1"/>
</dbReference>
<dbReference type="PROSITE" id="PS50929">
    <property type="entry name" value="ABC_TM1F"/>
    <property type="match status" value="1"/>
</dbReference>
<dbReference type="PROSITE" id="PS00211">
    <property type="entry name" value="ABC_TRANSPORTER_1"/>
    <property type="match status" value="1"/>
</dbReference>
<dbReference type="PROSITE" id="PS50893">
    <property type="entry name" value="ABC_TRANSPORTER_2"/>
    <property type="match status" value="1"/>
</dbReference>
<protein>
    <recommendedName>
        <fullName>Heterocyst differentiation ATP-binding protein HepA</fullName>
    </recommendedName>
</protein>
<sequence length="607" mass="67790">MPKSPHKLFKANSFWKENNLILREIKHFRKIAILAVIFSFLAASFEGVSIGFLLSFLQKLTSPNDPIQTGISWVDMILAADAWPIPPIYRISLLILLSTWMRATFNYFGGVYTESAQLNLADRLHKQIFEQLQALRLSYFAQTRSGELINTITTEIERIKQGFSGLAFVLTRIMTVCVYFVVMFSISWQLSIISVLIFLLLAVGLSTLNKRVRETSFGISHANAQFTAVAVEFINGIRTIQAFGTQEFERQRFYKASTNQLNAAIKVVLAWTLVKPIAEGIATTVLISLIVISFATFTLPVASLLTFFFVLVRVIPNIQDINGTVAFLSTLQGSSENIKNILQTNNKPYLKNGKLHFQGLKRSIDLVSVDFGYTADNLVLNNITLTIERGKTTALVGASGAGKTTLADLIPRFYDPTEGQILVDGLDVQYFEINSLRRKMAVVSQDTFIFNTSIRDNIAYGTSGASEAEIREVARLANALQFIEEMPEGFDTKLGDRGVRLSGGQRQRIAIARALLRDPEILILDEATSALDSVSERLIQESIEKLSVGRTVIAIAHRLSTIAKADKVVVMEQGRIVEQGNYQELLEQRGKLWKYHQMQHESGQTNS</sequence>
<evidence type="ECO:0000255" key="1">
    <source>
        <dbReference type="PROSITE-ProRule" id="PRU00434"/>
    </source>
</evidence>
<evidence type="ECO:0000255" key="2">
    <source>
        <dbReference type="PROSITE-ProRule" id="PRU00441"/>
    </source>
</evidence>
<evidence type="ECO:0000305" key="3"/>
<accession>P22638</accession>